<feature type="chain" id="PRO_0000355453" description="Cytochrome b6-f complex subunit 8">
    <location>
        <begin position="1"/>
        <end position="29"/>
    </location>
</feature>
<feature type="transmembrane region" description="Helical" evidence="1">
    <location>
        <begin position="3"/>
        <end position="23"/>
    </location>
</feature>
<keyword id="KW-0150">Chloroplast</keyword>
<keyword id="KW-0249">Electron transport</keyword>
<keyword id="KW-0472">Membrane</keyword>
<keyword id="KW-0602">Photosynthesis</keyword>
<keyword id="KW-0934">Plastid</keyword>
<keyword id="KW-0793">Thylakoid</keyword>
<keyword id="KW-0812">Transmembrane</keyword>
<keyword id="KW-1133">Transmembrane helix</keyword>
<keyword id="KW-0813">Transport</keyword>
<accession>B0Z4V8</accession>
<protein>
    <recommendedName>
        <fullName evidence="1">Cytochrome b6-f complex subunit 8</fullName>
    </recommendedName>
    <alternativeName>
        <fullName evidence="1">Cytochrome b6-f complex subunit PetN</fullName>
    </alternativeName>
    <alternativeName>
        <fullName evidence="1">Cytochrome b6-f complex subunit VIII</fullName>
    </alternativeName>
</protein>
<comment type="function">
    <text evidence="1">Component of the cytochrome b6-f complex, which mediates electron transfer between photosystem II (PSII) and photosystem I (PSI), cyclic electron flow around PSI, and state transitions.</text>
</comment>
<comment type="subunit">
    <text evidence="1">The 4 large subunits of the cytochrome b6-f complex are cytochrome b6, subunit IV (17 kDa polypeptide, PetD), cytochrome f and the Rieske protein, while the 4 small subunits are PetG, PetL, PetM and PetN. The complex functions as a dimer.</text>
</comment>
<comment type="subcellular location">
    <subcellularLocation>
        <location evidence="1">Plastid</location>
        <location evidence="1">Chloroplast thylakoid membrane</location>
        <topology evidence="1">Single-pass membrane protein</topology>
    </subcellularLocation>
</comment>
<comment type="similarity">
    <text evidence="1">Belongs to the PetN family.</text>
</comment>
<organism>
    <name type="scientific">Oenothera biennis</name>
    <name type="common">German evening primrose</name>
    <name type="synonym">Onagra biennis</name>
    <dbReference type="NCBI Taxonomy" id="3942"/>
    <lineage>
        <taxon>Eukaryota</taxon>
        <taxon>Viridiplantae</taxon>
        <taxon>Streptophyta</taxon>
        <taxon>Embryophyta</taxon>
        <taxon>Tracheophyta</taxon>
        <taxon>Spermatophyta</taxon>
        <taxon>Magnoliopsida</taxon>
        <taxon>eudicotyledons</taxon>
        <taxon>Gunneridae</taxon>
        <taxon>Pentapetalae</taxon>
        <taxon>rosids</taxon>
        <taxon>malvids</taxon>
        <taxon>Myrtales</taxon>
        <taxon>Onagraceae</taxon>
        <taxon>Onagroideae</taxon>
        <taxon>Onagreae</taxon>
        <taxon>Oenothera</taxon>
    </lineage>
</organism>
<name>PETN_OENBI</name>
<sequence length="29" mass="3170">MDIVSLAWAALMVVFTFSLSLVVWGRSGL</sequence>
<geneLocation type="chloroplast"/>
<dbReference type="EMBL" id="EU262889">
    <property type="protein sequence ID" value="ABW98870.1"/>
    <property type="molecule type" value="Genomic_DNA"/>
</dbReference>
<dbReference type="RefSeq" id="YP_001687365.1">
    <property type="nucleotide sequence ID" value="NC_010361.1"/>
</dbReference>
<dbReference type="SMR" id="B0Z4V8"/>
<dbReference type="GeneID" id="5952084"/>
<dbReference type="GO" id="GO:0009535">
    <property type="term" value="C:chloroplast thylakoid membrane"/>
    <property type="evidence" value="ECO:0007669"/>
    <property type="project" value="UniProtKB-SubCell"/>
</dbReference>
<dbReference type="GO" id="GO:0009512">
    <property type="term" value="C:cytochrome b6f complex"/>
    <property type="evidence" value="ECO:0007669"/>
    <property type="project" value="InterPro"/>
</dbReference>
<dbReference type="GO" id="GO:0045158">
    <property type="term" value="F:electron transporter, transferring electrons within cytochrome b6/f complex of photosystem II activity"/>
    <property type="evidence" value="ECO:0007669"/>
    <property type="project" value="InterPro"/>
</dbReference>
<dbReference type="GO" id="GO:0017004">
    <property type="term" value="P:cytochrome complex assembly"/>
    <property type="evidence" value="ECO:0007669"/>
    <property type="project" value="UniProtKB-UniRule"/>
</dbReference>
<dbReference type="GO" id="GO:0015979">
    <property type="term" value="P:photosynthesis"/>
    <property type="evidence" value="ECO:0007669"/>
    <property type="project" value="UniProtKB-KW"/>
</dbReference>
<dbReference type="HAMAP" id="MF_00395">
    <property type="entry name" value="Cytb6_f_PetN"/>
    <property type="match status" value="1"/>
</dbReference>
<dbReference type="InterPro" id="IPR036143">
    <property type="entry name" value="Cytochr_b6-f_cplx_su8_sf"/>
</dbReference>
<dbReference type="InterPro" id="IPR005497">
    <property type="entry name" value="Cytochrome_b6-f_cplx_su8"/>
</dbReference>
<dbReference type="Pfam" id="PF03742">
    <property type="entry name" value="PetN"/>
    <property type="match status" value="1"/>
</dbReference>
<dbReference type="SUPFAM" id="SSF103451">
    <property type="entry name" value="PetN subunit of the cytochrome b6f complex"/>
    <property type="match status" value="1"/>
</dbReference>
<proteinExistence type="inferred from homology"/>
<evidence type="ECO:0000255" key="1">
    <source>
        <dbReference type="HAMAP-Rule" id="MF_00395"/>
    </source>
</evidence>
<gene>
    <name evidence="1" type="primary">petN</name>
</gene>
<reference key="1">
    <citation type="journal article" date="2008" name="Nucleic Acids Res.">
        <title>The complete nucleotide sequences of the five genetically distinct plastid genomes of Oenothera, subsection Oenothera: I. Sequence evaluation and plastome evolution.</title>
        <authorList>
            <person name="Greiner S."/>
            <person name="Wang X."/>
            <person name="Rauwolf U."/>
            <person name="Silber M.V."/>
            <person name="Mayer K."/>
            <person name="Meurer J."/>
            <person name="Haberer G."/>
            <person name="Herrmann R.G."/>
        </authorList>
    </citation>
    <scope>NUCLEOTIDE SEQUENCE [LARGE SCALE GENOMIC DNA]</scope>
    <source>
        <strain>cv. Suaveolens Grado</strain>
    </source>
</reference>